<accession>Q95LZ5</accession>
<dbReference type="EMBL" id="AB071046">
    <property type="protein sequence ID" value="BAB64439.1"/>
    <property type="molecule type" value="mRNA"/>
</dbReference>
<dbReference type="RefSeq" id="NP_001306561.1">
    <property type="nucleotide sequence ID" value="NM_001319632.1"/>
</dbReference>
<dbReference type="SMR" id="Q95LZ5"/>
<dbReference type="STRING" id="9541.ENSMFAP00000030467"/>
<dbReference type="eggNOG" id="KOG1124">
    <property type="taxonomic scope" value="Eukaryota"/>
</dbReference>
<dbReference type="Proteomes" id="UP000233100">
    <property type="component" value="Unplaced"/>
</dbReference>
<dbReference type="Gene3D" id="1.25.40.10">
    <property type="entry name" value="Tetratricopeptide repeat domain"/>
    <property type="match status" value="5"/>
</dbReference>
<dbReference type="InterPro" id="IPR011990">
    <property type="entry name" value="TPR-like_helical_dom_sf"/>
</dbReference>
<dbReference type="InterPro" id="IPR019734">
    <property type="entry name" value="TPR_rpt"/>
</dbReference>
<dbReference type="PANTHER" id="PTHR45153">
    <property type="entry name" value="TETRATRICOPEPTIDE REPEAT PROTEIN 16"/>
    <property type="match status" value="1"/>
</dbReference>
<dbReference type="PANTHER" id="PTHR45153:SF1">
    <property type="entry name" value="TETRATRICOPEPTIDE REPEAT PROTEIN 16"/>
    <property type="match status" value="1"/>
</dbReference>
<dbReference type="Pfam" id="PF00515">
    <property type="entry name" value="TPR_1"/>
    <property type="match status" value="1"/>
</dbReference>
<dbReference type="SMART" id="SM00028">
    <property type="entry name" value="TPR"/>
    <property type="match status" value="8"/>
</dbReference>
<dbReference type="SUPFAM" id="SSF81901">
    <property type="entry name" value="HCP-like"/>
    <property type="match status" value="1"/>
</dbReference>
<dbReference type="SUPFAM" id="SSF48452">
    <property type="entry name" value="TPR-like"/>
    <property type="match status" value="1"/>
</dbReference>
<dbReference type="PROSITE" id="PS50005">
    <property type="entry name" value="TPR"/>
    <property type="match status" value="7"/>
</dbReference>
<dbReference type="PROSITE" id="PS50293">
    <property type="entry name" value="TPR_REGION"/>
    <property type="match status" value="1"/>
</dbReference>
<evidence type="ECO:0000256" key="1">
    <source>
        <dbReference type="SAM" id="MobiDB-lite"/>
    </source>
</evidence>
<keyword id="KW-1185">Reference proteome</keyword>
<keyword id="KW-0677">Repeat</keyword>
<keyword id="KW-0802">TPR repeat</keyword>
<name>TTC16_MACFA</name>
<protein>
    <recommendedName>
        <fullName>Tetratricopeptide repeat protein 16</fullName>
        <shortName>TPR repeat protein 16</shortName>
    </recommendedName>
</protein>
<sequence>MTDSDEDALKVDQGPSQDIPKPWVIPAPKGFLQHIFGTSQVFQSICDVKPKVTGLTVPLKVREYYSRGQQCLEQADWETAVLFFSRALHLDPQLVDFYALRAEAYLQLCDFSSAAQNLRRAYSLQQDNCKHLERLTFVLYLQGQCLFEQCAFLDALNVFSHAAELQPEKACFRYRCMACLLALEQHPACLSLITEELKQDTTNADVYILRARLYNFLQKPHLCYRDLHGALLLNPKHPQARMLLQKMVAQAQQARQDAGILAVQGRLQHALQRINCAIENNPLDPSFFLFRGTMYRRLQEFDGAVEDFLKVLDMVTEDQEDIMRQAQRQLLLTYNDFAVHCYRQGAYQEGVLLLNKALRDEQQEKGLYINRGDCFFQLGNLAFAEADYQQALALSPQDEGANTRMGLLQEKMGFCEQKHRQFQKAEDHFSTAIRHNPQKAQYYLYRAKSRQLLQNIFGARQDVATVLLLNPKQPKLSLLMTNLFPGMSVEEVLSTQIAHLARLQLERMVEGSLQAGGPQGIVGMLKQWELERQKALALQHSWKQGEPLIETSEKLQATPEIPQVEPGSSEGQAEAPKEEEEKEEEEQKEEEEQKKEEKKEEKKPKLTPSKVASLSESYLDQTSLASSMSFRTTCTSETETSAICQEYRSTSATAMTFSDSSLLKTQSSDSGNNREALSHGPRKIKDIQGQRQSLSKTQATQSQRQNFSKTKAAAHRRNSSKTKATQGQGRRSSKTEATQGQRQSSSEIETSQGPRQEPSKTKTTRSPRQRPRKVKAARGRSWRPSKLDATQGRRRGLLRSSTKTEAFYDSNWSLSKTEDVQGQGQRTSKAEAAQGKSRGMSSTSSKAESTWGPSPSVSKTEVGQDLTYYEVL</sequence>
<organism>
    <name type="scientific">Macaca fascicularis</name>
    <name type="common">Crab-eating macaque</name>
    <name type="synonym">Cynomolgus monkey</name>
    <dbReference type="NCBI Taxonomy" id="9541"/>
    <lineage>
        <taxon>Eukaryota</taxon>
        <taxon>Metazoa</taxon>
        <taxon>Chordata</taxon>
        <taxon>Craniata</taxon>
        <taxon>Vertebrata</taxon>
        <taxon>Euteleostomi</taxon>
        <taxon>Mammalia</taxon>
        <taxon>Eutheria</taxon>
        <taxon>Euarchontoglires</taxon>
        <taxon>Primates</taxon>
        <taxon>Haplorrhini</taxon>
        <taxon>Catarrhini</taxon>
        <taxon>Cercopithecidae</taxon>
        <taxon>Cercopithecinae</taxon>
        <taxon>Macaca</taxon>
    </lineage>
</organism>
<feature type="chain" id="PRO_0000106404" description="Tetratricopeptide repeat protein 16">
    <location>
        <begin position="1"/>
        <end position="872"/>
    </location>
</feature>
<feature type="repeat" description="TPR 1">
    <location>
        <begin position="61"/>
        <end position="94"/>
    </location>
</feature>
<feature type="repeat" description="TPR 2">
    <location>
        <begin position="96"/>
        <end position="128"/>
    </location>
</feature>
<feature type="repeat" description="TPR 3">
    <location>
        <begin position="136"/>
        <end position="169"/>
    </location>
</feature>
<feature type="repeat" description="TPR 4">
    <location>
        <begin position="251"/>
        <end position="284"/>
    </location>
</feature>
<feature type="repeat" description="TPR 5">
    <location>
        <begin position="285"/>
        <end position="318"/>
    </location>
</feature>
<feature type="repeat" description="TPR 6">
    <location>
        <begin position="331"/>
        <end position="364"/>
    </location>
</feature>
<feature type="repeat" description="TPR 7">
    <location>
        <begin position="365"/>
        <end position="398"/>
    </location>
</feature>
<feature type="repeat" description="TPR 8">
    <location>
        <begin position="406"/>
        <end position="439"/>
    </location>
</feature>
<feature type="region of interest" description="Disordered" evidence="1">
    <location>
        <begin position="1"/>
        <end position="20"/>
    </location>
</feature>
<feature type="region of interest" description="Disordered" evidence="1">
    <location>
        <begin position="557"/>
        <end position="640"/>
    </location>
</feature>
<feature type="region of interest" description="Disordered" evidence="1">
    <location>
        <begin position="653"/>
        <end position="872"/>
    </location>
</feature>
<feature type="compositionally biased region" description="Acidic residues" evidence="1">
    <location>
        <begin position="577"/>
        <end position="590"/>
    </location>
</feature>
<feature type="compositionally biased region" description="Basic and acidic residues" evidence="1">
    <location>
        <begin position="591"/>
        <end position="604"/>
    </location>
</feature>
<feature type="compositionally biased region" description="Polar residues" evidence="1">
    <location>
        <begin position="610"/>
        <end position="640"/>
    </location>
</feature>
<feature type="compositionally biased region" description="Polar residues" evidence="1">
    <location>
        <begin position="653"/>
        <end position="675"/>
    </location>
</feature>
<feature type="compositionally biased region" description="Polar residues" evidence="1">
    <location>
        <begin position="689"/>
        <end position="709"/>
    </location>
</feature>
<feature type="compositionally biased region" description="Polar residues" evidence="1">
    <location>
        <begin position="721"/>
        <end position="754"/>
    </location>
</feature>
<feature type="compositionally biased region" description="Basic residues" evidence="1">
    <location>
        <begin position="762"/>
        <end position="783"/>
    </location>
</feature>
<feature type="compositionally biased region" description="Polar residues" evidence="1">
    <location>
        <begin position="799"/>
        <end position="827"/>
    </location>
</feature>
<feature type="compositionally biased region" description="Polar residues" evidence="1">
    <location>
        <begin position="839"/>
        <end position="861"/>
    </location>
</feature>
<gene>
    <name type="primary">TTC16</name>
    <name type="ORF">QtsA-13222</name>
</gene>
<proteinExistence type="evidence at transcript level"/>
<reference key="1">
    <citation type="journal article" date="2002" name="BMC Genomics">
        <title>Cynomolgus monkey testicular cDNAs for discovery of novel human genes in the human genome sequence.</title>
        <authorList>
            <person name="Osada N."/>
            <person name="Hida M."/>
            <person name="Kusuda J."/>
            <person name="Tanuma R."/>
            <person name="Hirata M."/>
            <person name="Suto Y."/>
            <person name="Hirai M."/>
            <person name="Terao K."/>
            <person name="Sugano S."/>
            <person name="Hashimoto K."/>
        </authorList>
    </citation>
    <scope>NUCLEOTIDE SEQUENCE [LARGE SCALE MRNA]</scope>
    <source>
        <tissue>Testis</tissue>
    </source>
</reference>